<reference evidence="12" key="1">
    <citation type="journal article" date="2004" name="Eur. J. Cell Biol.">
        <title>Two novel LEM-domain proteins are splice products of the annotated Drosophila melanogaster gene CG9424 (Bocksbeutel).</title>
        <authorList>
            <person name="Wagner N."/>
            <person name="Schmitt J."/>
            <person name="Krohne G."/>
        </authorList>
    </citation>
    <scope>NUCLEOTIDE SEQUENCE [MRNA] (ISOFORMS A AND B)</scope>
    <scope>FUNCTION</scope>
    <scope>SUBCELLULAR LOCATION (ISOFORMS A AND B)</scope>
    <scope>DEVELOPMENTAL STAGE (ISOFORMS A AND B)</scope>
    <scope>DISRUPTION PHENOTYPE</scope>
</reference>
<reference evidence="14" key="2">
    <citation type="journal article" date="2000" name="Science">
        <title>The genome sequence of Drosophila melanogaster.</title>
        <authorList>
            <person name="Adams M.D."/>
            <person name="Celniker S.E."/>
            <person name="Holt R.A."/>
            <person name="Evans C.A."/>
            <person name="Gocayne J.D."/>
            <person name="Amanatides P.G."/>
            <person name="Scherer S.E."/>
            <person name="Li P.W."/>
            <person name="Hoskins R.A."/>
            <person name="Galle R.F."/>
            <person name="George R.A."/>
            <person name="Lewis S.E."/>
            <person name="Richards S."/>
            <person name="Ashburner M."/>
            <person name="Henderson S.N."/>
            <person name="Sutton G.G."/>
            <person name="Wortman J.R."/>
            <person name="Yandell M.D."/>
            <person name="Zhang Q."/>
            <person name="Chen L.X."/>
            <person name="Brandon R.C."/>
            <person name="Rogers Y.-H.C."/>
            <person name="Blazej R.G."/>
            <person name="Champe M."/>
            <person name="Pfeiffer B.D."/>
            <person name="Wan K.H."/>
            <person name="Doyle C."/>
            <person name="Baxter E.G."/>
            <person name="Helt G."/>
            <person name="Nelson C.R."/>
            <person name="Miklos G.L.G."/>
            <person name="Abril J.F."/>
            <person name="Agbayani A."/>
            <person name="An H.-J."/>
            <person name="Andrews-Pfannkoch C."/>
            <person name="Baldwin D."/>
            <person name="Ballew R.M."/>
            <person name="Basu A."/>
            <person name="Baxendale J."/>
            <person name="Bayraktaroglu L."/>
            <person name="Beasley E.M."/>
            <person name="Beeson K.Y."/>
            <person name="Benos P.V."/>
            <person name="Berman B.P."/>
            <person name="Bhandari D."/>
            <person name="Bolshakov S."/>
            <person name="Borkova D."/>
            <person name="Botchan M.R."/>
            <person name="Bouck J."/>
            <person name="Brokstein P."/>
            <person name="Brottier P."/>
            <person name="Burtis K.C."/>
            <person name="Busam D.A."/>
            <person name="Butler H."/>
            <person name="Cadieu E."/>
            <person name="Center A."/>
            <person name="Chandra I."/>
            <person name="Cherry J.M."/>
            <person name="Cawley S."/>
            <person name="Dahlke C."/>
            <person name="Davenport L.B."/>
            <person name="Davies P."/>
            <person name="de Pablos B."/>
            <person name="Delcher A."/>
            <person name="Deng Z."/>
            <person name="Mays A.D."/>
            <person name="Dew I."/>
            <person name="Dietz S.M."/>
            <person name="Dodson K."/>
            <person name="Doup L.E."/>
            <person name="Downes M."/>
            <person name="Dugan-Rocha S."/>
            <person name="Dunkov B.C."/>
            <person name="Dunn P."/>
            <person name="Durbin K.J."/>
            <person name="Evangelista C.C."/>
            <person name="Ferraz C."/>
            <person name="Ferriera S."/>
            <person name="Fleischmann W."/>
            <person name="Fosler C."/>
            <person name="Gabrielian A.E."/>
            <person name="Garg N.S."/>
            <person name="Gelbart W.M."/>
            <person name="Glasser K."/>
            <person name="Glodek A."/>
            <person name="Gong F."/>
            <person name="Gorrell J.H."/>
            <person name="Gu Z."/>
            <person name="Guan P."/>
            <person name="Harris M."/>
            <person name="Harris N.L."/>
            <person name="Harvey D.A."/>
            <person name="Heiman T.J."/>
            <person name="Hernandez J.R."/>
            <person name="Houck J."/>
            <person name="Hostin D."/>
            <person name="Houston K.A."/>
            <person name="Howland T.J."/>
            <person name="Wei M.-H."/>
            <person name="Ibegwam C."/>
            <person name="Jalali M."/>
            <person name="Kalush F."/>
            <person name="Karpen G.H."/>
            <person name="Ke Z."/>
            <person name="Kennison J.A."/>
            <person name="Ketchum K.A."/>
            <person name="Kimmel B.E."/>
            <person name="Kodira C.D."/>
            <person name="Kraft C.L."/>
            <person name="Kravitz S."/>
            <person name="Kulp D."/>
            <person name="Lai Z."/>
            <person name="Lasko P."/>
            <person name="Lei Y."/>
            <person name="Levitsky A.A."/>
            <person name="Li J.H."/>
            <person name="Li Z."/>
            <person name="Liang Y."/>
            <person name="Lin X."/>
            <person name="Liu X."/>
            <person name="Mattei B."/>
            <person name="McIntosh T.C."/>
            <person name="McLeod M.P."/>
            <person name="McPherson D."/>
            <person name="Merkulov G."/>
            <person name="Milshina N.V."/>
            <person name="Mobarry C."/>
            <person name="Morris J."/>
            <person name="Moshrefi A."/>
            <person name="Mount S.M."/>
            <person name="Moy M."/>
            <person name="Murphy B."/>
            <person name="Murphy L."/>
            <person name="Muzny D.M."/>
            <person name="Nelson D.L."/>
            <person name="Nelson D.R."/>
            <person name="Nelson K.A."/>
            <person name="Nixon K."/>
            <person name="Nusskern D.R."/>
            <person name="Pacleb J.M."/>
            <person name="Palazzolo M."/>
            <person name="Pittman G.S."/>
            <person name="Pan S."/>
            <person name="Pollard J."/>
            <person name="Puri V."/>
            <person name="Reese M.G."/>
            <person name="Reinert K."/>
            <person name="Remington K."/>
            <person name="Saunders R.D.C."/>
            <person name="Scheeler F."/>
            <person name="Shen H."/>
            <person name="Shue B.C."/>
            <person name="Siden-Kiamos I."/>
            <person name="Simpson M."/>
            <person name="Skupski M.P."/>
            <person name="Smith T.J."/>
            <person name="Spier E."/>
            <person name="Spradling A.C."/>
            <person name="Stapleton M."/>
            <person name="Strong R."/>
            <person name="Sun E."/>
            <person name="Svirskas R."/>
            <person name="Tector C."/>
            <person name="Turner R."/>
            <person name="Venter E."/>
            <person name="Wang A.H."/>
            <person name="Wang X."/>
            <person name="Wang Z.-Y."/>
            <person name="Wassarman D.A."/>
            <person name="Weinstock G.M."/>
            <person name="Weissenbach J."/>
            <person name="Williams S.M."/>
            <person name="Woodage T."/>
            <person name="Worley K.C."/>
            <person name="Wu D."/>
            <person name="Yang S."/>
            <person name="Yao Q.A."/>
            <person name="Ye J."/>
            <person name="Yeh R.-F."/>
            <person name="Zaveri J.S."/>
            <person name="Zhan M."/>
            <person name="Zhang G."/>
            <person name="Zhao Q."/>
            <person name="Zheng L."/>
            <person name="Zheng X.H."/>
            <person name="Zhong F.N."/>
            <person name="Zhong W."/>
            <person name="Zhou X."/>
            <person name="Zhu S.C."/>
            <person name="Zhu X."/>
            <person name="Smith H.O."/>
            <person name="Gibbs R.A."/>
            <person name="Myers E.W."/>
            <person name="Rubin G.M."/>
            <person name="Venter J.C."/>
        </authorList>
    </citation>
    <scope>NUCLEOTIDE SEQUENCE [LARGE SCALE GENOMIC DNA]</scope>
    <source>
        <strain evidence="14">Berkeley</strain>
    </source>
</reference>
<reference evidence="14" key="3">
    <citation type="journal article" date="2002" name="Genome Biol.">
        <title>Annotation of the Drosophila melanogaster euchromatic genome: a systematic review.</title>
        <authorList>
            <person name="Misra S."/>
            <person name="Crosby M.A."/>
            <person name="Mungall C.J."/>
            <person name="Matthews B.B."/>
            <person name="Campbell K.S."/>
            <person name="Hradecky P."/>
            <person name="Huang Y."/>
            <person name="Kaminker J.S."/>
            <person name="Millburn G.H."/>
            <person name="Prochnik S.E."/>
            <person name="Smith C.D."/>
            <person name="Tupy J.L."/>
            <person name="Whitfield E.J."/>
            <person name="Bayraktaroglu L."/>
            <person name="Berman B.P."/>
            <person name="Bettencourt B.R."/>
            <person name="Celniker S.E."/>
            <person name="de Grey A.D.N.J."/>
            <person name="Drysdale R.A."/>
            <person name="Harris N.L."/>
            <person name="Richter J."/>
            <person name="Russo S."/>
            <person name="Schroeder A.J."/>
            <person name="Shu S.Q."/>
            <person name="Stapleton M."/>
            <person name="Yamada C."/>
            <person name="Ashburner M."/>
            <person name="Gelbart W.M."/>
            <person name="Rubin G.M."/>
            <person name="Lewis S.E."/>
        </authorList>
    </citation>
    <scope>GENOME REANNOTATION</scope>
    <source>
        <strain evidence="14">Berkeley</strain>
    </source>
</reference>
<reference evidence="11" key="4">
    <citation type="submission" date="2001-12" db="EMBL/GenBank/DDBJ databases">
        <authorList>
            <person name="Stapleton M."/>
            <person name="Brokstein P."/>
            <person name="Hong L."/>
            <person name="Agbayani A."/>
            <person name="Carlson J."/>
            <person name="Champe M."/>
            <person name="Chavez C."/>
            <person name="Dorsett V."/>
            <person name="Farfan D."/>
            <person name="Frise E."/>
            <person name="George R."/>
            <person name="Gonzalez M."/>
            <person name="Guarin H."/>
            <person name="Li P."/>
            <person name="Liao G."/>
            <person name="Miranda A."/>
            <person name="Mungall C.J."/>
            <person name="Nunoo J."/>
            <person name="Pacleb J."/>
            <person name="Paragas V."/>
            <person name="Park S."/>
            <person name="Phouanenavong S."/>
            <person name="Wan K."/>
            <person name="Yu C."/>
            <person name="Lewis S.E."/>
            <person name="Rubin G.M."/>
            <person name="Celniker S."/>
        </authorList>
    </citation>
    <scope>NUCLEOTIDE SEQUENCE [LARGE SCALE MRNA] (ISOFORM A)</scope>
    <source>
        <strain evidence="11">Berkeley</strain>
    </source>
</reference>
<reference evidence="9" key="5">
    <citation type="journal article" date="2006" name="Eur. J. Cell Biol.">
        <title>The Drosophila melanogaster LEM-domain protein MAN1.</title>
        <authorList>
            <person name="Wagner N."/>
            <person name="Kagermeier B."/>
            <person name="Loserth S."/>
            <person name="Krohne G."/>
        </authorList>
    </citation>
    <scope>SUBCELLULAR LOCATION</scope>
    <scope>DEVELOPMENTAL STAGE</scope>
</reference>
<reference evidence="9" key="6">
    <citation type="journal article" date="2008" name="Genetics">
        <title>Tissue-specific defects are caused by loss of the Drosophila MAN1 LEM domain protein.</title>
        <authorList>
            <person name="Pinto B.S."/>
            <person name="Wilmington S.R."/>
            <person name="Hornick E.E."/>
            <person name="Wallrath L.L."/>
            <person name="Geyer P.K."/>
        </authorList>
    </citation>
    <scope>SUBCELLULAR LOCATION</scope>
</reference>
<reference evidence="9" key="7">
    <citation type="journal article" date="2014" name="Genetics">
        <title>Unique and shared functions of nuclear lamina LEM domain proteins in Drosophila.</title>
        <authorList>
            <person name="Barton L.J."/>
            <person name="Wilmington S.R."/>
            <person name="Martin M.J."/>
            <person name="Skopec H.M."/>
            <person name="Lovander K.E."/>
            <person name="Pinto B.S."/>
            <person name="Geyer P.K."/>
        </authorList>
    </citation>
    <scope>FUNCTION</scope>
    <scope>SUBCELLULAR LOCATION</scope>
    <scope>DISRUPTION PHENOTYPE</scope>
</reference>
<accession>Q709R6</accession>
<accession>Q8SZZ5</accession>
<accession>Q9VHA7</accession>
<sequence length="399" mass="44204">MSDLSYLDTLGNKELLAKCLEHGLPGVPVTDSTRSVIIRRLKAKITGVPLNKSKSASKKAIPRRETVHGSQVTTPTSEPVRRTPGKSAGRTSSNNNKISEQSRRTIAYGLDNTSISGRSVQTTTTVSDMSSQSEDDDSYMVDSPVPNYSKDQQPRRYVSLAKSGVLTTSYTREVDQPLYEQEDIPRSYTYERPHVPAATLHALPTYEPRIEPSTYRPTDLGFSRPLLTQTNLNSTSYEESSTYNPKLSPISPRNTFSGSARPFGGPAPAPAPIRQRQSVPVSGSNLARGRLLQPTTAVNTLYPQLNEFYDQPNDAGEPMETESESEVEEVPINSHFQKNRFSPLARKPLVRHHDQVSPMAQFRALAVSLDQKYNLKFYLILVVSVMLATMVYVVLTPNA</sequence>
<organism evidence="14">
    <name type="scientific">Drosophila melanogaster</name>
    <name type="common">Fruit fly</name>
    <dbReference type="NCBI Taxonomy" id="7227"/>
    <lineage>
        <taxon>Eukaryota</taxon>
        <taxon>Metazoa</taxon>
        <taxon>Ecdysozoa</taxon>
        <taxon>Arthropoda</taxon>
        <taxon>Hexapoda</taxon>
        <taxon>Insecta</taxon>
        <taxon>Pterygota</taxon>
        <taxon>Neoptera</taxon>
        <taxon>Endopterygota</taxon>
        <taxon>Diptera</taxon>
        <taxon>Brachycera</taxon>
        <taxon>Muscomorpha</taxon>
        <taxon>Ephydroidea</taxon>
        <taxon>Drosophilidae</taxon>
        <taxon>Drosophila</taxon>
        <taxon>Sophophora</taxon>
    </lineage>
</organism>
<protein>
    <recommendedName>
        <fullName evidence="9">LEM domain-containing protein Bocksbeutel</fullName>
    </recommendedName>
</protein>
<name>BOCKS_DROME</name>
<proteinExistence type="evidence at protein level"/>
<keyword id="KW-0025">Alternative splicing</keyword>
<keyword id="KW-0131">Cell cycle</keyword>
<keyword id="KW-0132">Cell division</keyword>
<keyword id="KW-0963">Cytoplasm</keyword>
<keyword id="KW-0256">Endoplasmic reticulum</keyword>
<keyword id="KW-0472">Membrane</keyword>
<keyword id="KW-0498">Mitosis</keyword>
<keyword id="KW-0539">Nucleus</keyword>
<keyword id="KW-1185">Reference proteome</keyword>
<keyword id="KW-0812">Transmembrane</keyword>
<keyword id="KW-1133">Transmembrane helix</keyword>
<dbReference type="EMBL" id="AE014297">
    <property type="protein sequence ID" value="AAF54412.2"/>
    <property type="molecule type" value="Genomic_DNA"/>
</dbReference>
<dbReference type="EMBL" id="AE014297">
    <property type="protein sequence ID" value="AAX52941.1"/>
    <property type="molecule type" value="Genomic_DNA"/>
</dbReference>
<dbReference type="EMBL" id="AY069685">
    <property type="protein sequence ID" value="AAL39830.1"/>
    <property type="molecule type" value="mRNA"/>
</dbReference>
<dbReference type="EMBL" id="AJ606681">
    <property type="protein sequence ID" value="CAE54810.1"/>
    <property type="molecule type" value="mRNA"/>
</dbReference>
<dbReference type="EMBL" id="AJ606682">
    <property type="protein sequence ID" value="CAE54811.1"/>
    <property type="molecule type" value="mRNA"/>
</dbReference>
<dbReference type="RefSeq" id="NP_001014611.1">
    <molecule id="Q709R6-1"/>
    <property type="nucleotide sequence ID" value="NM_001014611.3"/>
</dbReference>
<dbReference type="RefSeq" id="NP_649917.1">
    <molecule id="Q709R6-2"/>
    <property type="nucleotide sequence ID" value="NM_141660.4"/>
</dbReference>
<dbReference type="SMR" id="Q709R6"/>
<dbReference type="FunCoup" id="Q709R6">
    <property type="interactions" value="113"/>
</dbReference>
<dbReference type="IntAct" id="Q709R6">
    <property type="interactions" value="24"/>
</dbReference>
<dbReference type="STRING" id="7227.FBpp0099982"/>
<dbReference type="PaxDb" id="7227-FBpp0099982"/>
<dbReference type="DNASU" id="41162"/>
<dbReference type="EnsemblMetazoa" id="FBtr0082105">
    <molecule id="Q709R6-2"/>
    <property type="protein sequence ID" value="FBpp0099981"/>
    <property type="gene ID" value="FBgn0037719"/>
</dbReference>
<dbReference type="EnsemblMetazoa" id="FBtr0100537">
    <molecule id="Q709R6-1"/>
    <property type="protein sequence ID" value="FBpp0099982"/>
    <property type="gene ID" value="FBgn0037719"/>
</dbReference>
<dbReference type="GeneID" id="41162"/>
<dbReference type="KEGG" id="dme:Dmel_CG9424"/>
<dbReference type="UCSC" id="CG9424-RA">
    <property type="organism name" value="d. melanogaster"/>
</dbReference>
<dbReference type="UCSC" id="CG9424-RB">
    <molecule id="Q709R6-1"/>
    <property type="organism name" value="d. melanogaster"/>
</dbReference>
<dbReference type="AGR" id="FB:FBgn0037719"/>
<dbReference type="CTD" id="41162"/>
<dbReference type="FlyBase" id="FBgn0037719">
    <property type="gene designation" value="bocks"/>
</dbReference>
<dbReference type="VEuPathDB" id="VectorBase:FBgn0037719"/>
<dbReference type="eggNOG" id="ENOG502T2WE">
    <property type="taxonomic scope" value="Eukaryota"/>
</dbReference>
<dbReference type="GeneTree" id="ENSGT00530000067345"/>
<dbReference type="InParanoid" id="Q709R6"/>
<dbReference type="OMA" id="LNQFYDQ"/>
<dbReference type="OrthoDB" id="8068829at2759"/>
<dbReference type="PhylomeDB" id="Q709R6"/>
<dbReference type="SignaLink" id="Q709R6"/>
<dbReference type="BioGRID-ORCS" id="41162">
    <property type="hits" value="0 hits in 1 CRISPR screen"/>
</dbReference>
<dbReference type="GenomeRNAi" id="41162"/>
<dbReference type="PRO" id="PR:Q709R6"/>
<dbReference type="Proteomes" id="UP000000803">
    <property type="component" value="Chromosome 3R"/>
</dbReference>
<dbReference type="Bgee" id="FBgn0037719">
    <property type="expression patterns" value="Expressed in adult tracheocyte (Drosophila) in open tracheal system trachea and 74 other cell types or tissues"/>
</dbReference>
<dbReference type="ExpressionAtlas" id="Q709R6">
    <property type="expression patterns" value="baseline and differential"/>
</dbReference>
<dbReference type="GO" id="GO:0005737">
    <property type="term" value="C:cytoplasm"/>
    <property type="evidence" value="ECO:0000314"/>
    <property type="project" value="FlyBase"/>
</dbReference>
<dbReference type="GO" id="GO:0005783">
    <property type="term" value="C:endoplasmic reticulum"/>
    <property type="evidence" value="ECO:0007669"/>
    <property type="project" value="UniProtKB-SubCell"/>
</dbReference>
<dbReference type="GO" id="GO:0016020">
    <property type="term" value="C:membrane"/>
    <property type="evidence" value="ECO:0000314"/>
    <property type="project" value="FlyBase"/>
</dbReference>
<dbReference type="GO" id="GO:0005635">
    <property type="term" value="C:nuclear envelope"/>
    <property type="evidence" value="ECO:0000314"/>
    <property type="project" value="FlyBase"/>
</dbReference>
<dbReference type="GO" id="GO:0005637">
    <property type="term" value="C:nuclear inner membrane"/>
    <property type="evidence" value="ECO:0007669"/>
    <property type="project" value="UniProtKB-SubCell"/>
</dbReference>
<dbReference type="GO" id="GO:0005654">
    <property type="term" value="C:nucleoplasm"/>
    <property type="evidence" value="ECO:0000314"/>
    <property type="project" value="FlyBase"/>
</dbReference>
<dbReference type="GO" id="GO:0051301">
    <property type="term" value="P:cell division"/>
    <property type="evidence" value="ECO:0007669"/>
    <property type="project" value="UniProtKB-KW"/>
</dbReference>
<dbReference type="CDD" id="cd12934">
    <property type="entry name" value="LEM"/>
    <property type="match status" value="1"/>
</dbReference>
<dbReference type="Gene3D" id="1.10.720.40">
    <property type="match status" value="1"/>
</dbReference>
<dbReference type="InterPro" id="IPR011015">
    <property type="entry name" value="LEM/LEM-like_dom_sf"/>
</dbReference>
<dbReference type="InterPro" id="IPR003887">
    <property type="entry name" value="LEM_dom"/>
</dbReference>
<dbReference type="Pfam" id="PF03020">
    <property type="entry name" value="LEM"/>
    <property type="match status" value="1"/>
</dbReference>
<dbReference type="SMART" id="SM00540">
    <property type="entry name" value="LEM"/>
    <property type="match status" value="1"/>
</dbReference>
<dbReference type="SUPFAM" id="SSF63451">
    <property type="entry name" value="LEM domain"/>
    <property type="match status" value="1"/>
</dbReference>
<dbReference type="PROSITE" id="PS50954">
    <property type="entry name" value="LEM"/>
    <property type="match status" value="1"/>
</dbReference>
<evidence type="ECO:0000255" key="1"/>
<evidence type="ECO:0000255" key="2">
    <source>
        <dbReference type="PROSITE-ProRule" id="PRU00313"/>
    </source>
</evidence>
<evidence type="ECO:0000256" key="3">
    <source>
        <dbReference type="SAM" id="MobiDB-lite"/>
    </source>
</evidence>
<evidence type="ECO:0000269" key="4">
    <source>
    </source>
</evidence>
<evidence type="ECO:0000269" key="5">
    <source>
    </source>
</evidence>
<evidence type="ECO:0000269" key="6">
    <source>
    </source>
</evidence>
<evidence type="ECO:0000269" key="7">
    <source>
    </source>
</evidence>
<evidence type="ECO:0000303" key="8">
    <source>
    </source>
</evidence>
<evidence type="ECO:0000305" key="9"/>
<evidence type="ECO:0000305" key="10">
    <source>
    </source>
</evidence>
<evidence type="ECO:0000312" key="11">
    <source>
        <dbReference type="EMBL" id="AAL39830.1"/>
    </source>
</evidence>
<evidence type="ECO:0000312" key="12">
    <source>
        <dbReference type="EMBL" id="CAE54810.1"/>
    </source>
</evidence>
<evidence type="ECO:0000312" key="13">
    <source>
        <dbReference type="FlyBase" id="FBgn0037719"/>
    </source>
</evidence>
<evidence type="ECO:0000312" key="14">
    <source>
        <dbReference type="Proteomes" id="UP000000803"/>
    </source>
</evidence>
<feature type="chain" id="PRO_0000436842" description="LEM domain-containing protein Bocksbeutel">
    <location>
        <begin position="1"/>
        <end position="399"/>
    </location>
</feature>
<feature type="transmembrane region" description="Helical" evidence="1">
    <location>
        <begin position="377"/>
        <end position="397"/>
    </location>
</feature>
<feature type="domain" description="LEM" evidence="2">
    <location>
        <begin position="4"/>
        <end position="48"/>
    </location>
</feature>
<feature type="region of interest" description="Disordered" evidence="3">
    <location>
        <begin position="49"/>
        <end position="103"/>
    </location>
</feature>
<feature type="region of interest" description="Disordered" evidence="3">
    <location>
        <begin position="119"/>
        <end position="141"/>
    </location>
</feature>
<feature type="region of interest" description="Disordered" evidence="3">
    <location>
        <begin position="233"/>
        <end position="287"/>
    </location>
</feature>
<feature type="compositionally biased region" description="Polar residues" evidence="3">
    <location>
        <begin position="68"/>
        <end position="77"/>
    </location>
</feature>
<feature type="compositionally biased region" description="Polar residues" evidence="3">
    <location>
        <begin position="89"/>
        <end position="99"/>
    </location>
</feature>
<feature type="compositionally biased region" description="Polar residues" evidence="3">
    <location>
        <begin position="233"/>
        <end position="256"/>
    </location>
</feature>
<feature type="splice variant" id="VSP_058424" description="In isoform A." evidence="4">
    <original>VR</original>
    <variation>CQ</variation>
    <location>
        <begin position="350"/>
        <end position="351"/>
    </location>
</feature>
<feature type="splice variant" id="VSP_058425" description="In isoform A." evidence="4">
    <location>
        <begin position="352"/>
        <end position="399"/>
    </location>
</feature>
<gene>
    <name evidence="13" type="primary">bocks</name>
    <name evidence="13" type="ORF">CG9424</name>
</gene>
<comment type="function">
    <text evidence="4 7">Inner nuclear membrane protein (PubMed:15035436, PubMed:24700158). May have a role in maintaining the structural integrity of the nuclear lamina (PubMed:24700158). During pupal development, plays essential and redundant functions with the other LEM domain proteins; MAN1 and Ote (PubMed:24700158). Also has a redundant but important role with Ote in larval development (PubMed:24700158).</text>
</comment>
<comment type="subcellular location">
    <subcellularLocation>
        <location evidence="4 5 6 7">Nucleus inner membrane</location>
        <topology evidence="1">Single-pass membrane protein</topology>
    </subcellularLocation>
    <subcellularLocation>
        <location evidence="4 5">Cytoplasm</location>
    </subcellularLocation>
    <subcellularLocation>
        <location evidence="5">Nucleus</location>
        <location evidence="5">Nucleoplasm</location>
    </subcellularLocation>
    <text evidence="4 10">Detected in the nucleus envelope and cytoplasm. In the cytoplasm, it appears to localize to discrete foci.</text>
</comment>
<comment type="subcellular location">
    <molecule>Isoform A</molecule>
    <subcellularLocation>
        <location evidence="4">Nucleus</location>
        <location evidence="4">Nucleoplasm</location>
    </subcellularLocation>
    <subcellularLocation>
        <location evidence="4">Cytoplasm</location>
    </subcellularLocation>
    <text evidence="4">Predominantly expressed in the nucleoplasm with very low expression levels in the cytoplasm.</text>
</comment>
<comment type="subcellular location">
    <molecule>Isoform B</molecule>
    <subcellularLocation>
        <location evidence="4">Nucleus inner membrane</location>
        <topology evidence="1">Single-pass membrane protein</topology>
    </subcellularLocation>
    <subcellularLocation>
        <location evidence="4">Endoplasmic reticulum</location>
    </subcellularLocation>
    <text evidence="4 10">Appears to be predominantly expressed in the nucleus envelope but expression is not uniform. Outside of the nucleus it is located to discrete foci which may be the endoplasmic reticulum.</text>
</comment>
<comment type="alternative products">
    <event type="alternative splicing"/>
    <isoform>
        <id>Q709R6-1</id>
        <name evidence="13">B</name>
        <name evidence="8">alpha</name>
        <sequence type="displayed"/>
    </isoform>
    <isoform>
        <id>Q709R6-2</id>
        <name evidence="13">A</name>
        <name evidence="8">beta</name>
        <sequence type="described" ref="VSP_058424 VSP_058425"/>
    </isoform>
</comment>
<comment type="developmental stage">
    <text evidence="4 5">Uniform expression throughout development and in adults (at protein level) (PubMed:16439308). Isoform A: Expressed in larvae (PubMed:15035436). Isoform B: Lower levels of expression in larvae compared to isoform A (PubMed:15035436).</text>
</comment>
<comment type="disruption phenotype">
    <text evidence="4 7">Viable and fertile, with no obvious phenotype (PubMed:15035436, PubMed:24700158). In the salivary gland nuclei of third-instar larvae, there are increased deformities in the nuclear lamina with 1 to 7 abnormal O-shaped Lam-containing structures (PubMed:24700158). No significant decrease in adult survival, however double mutants with either Ote or MAN1 do not survive to the adult stage (PubMed:24700158). Double bocks and Ote mutants larvae have small brains, their imaginal disks are reduced in size or absent, and only 10% of second-instar larvae reach the pupal stage (PubMed:24700158). In bocks and MAN1 double mutants, pupal survival and larvae development is unaffected (PubMed:24700158).</text>
</comment>